<protein>
    <recommendedName>
        <fullName>Probable polyketide synthase 34</fullName>
        <shortName>dipks34</shortName>
        <ecNumber>2.3.1.-</ecNumber>
    </recommendedName>
</protein>
<evidence type="ECO:0000250" key="1"/>
<evidence type="ECO:0000255" key="2"/>
<evidence type="ECO:0000255" key="3">
    <source>
        <dbReference type="PROSITE-ProRule" id="PRU00258"/>
    </source>
</evidence>
<evidence type="ECO:0000255" key="4">
    <source>
        <dbReference type="PROSITE-ProRule" id="PRU01348"/>
    </source>
</evidence>
<evidence type="ECO:0000255" key="5">
    <source>
        <dbReference type="PROSITE-ProRule" id="PRU01363"/>
    </source>
</evidence>
<evidence type="ECO:0000255" key="6">
    <source>
        <dbReference type="PROSITE-ProRule" id="PRU10022"/>
    </source>
</evidence>
<evidence type="ECO:0000256" key="7">
    <source>
        <dbReference type="SAM" id="MobiDB-lite"/>
    </source>
</evidence>
<dbReference type="EC" id="2.3.1.-"/>
<dbReference type="EMBL" id="AAFI02000169">
    <property type="protein sequence ID" value="EAL62074.1"/>
    <property type="molecule type" value="Genomic_DNA"/>
</dbReference>
<dbReference type="RefSeq" id="XP_635580.1">
    <property type="nucleotide sequence ID" value="XM_630488.1"/>
</dbReference>
<dbReference type="SMR" id="Q54FN2"/>
<dbReference type="FunCoup" id="Q54FN2">
    <property type="interactions" value="4"/>
</dbReference>
<dbReference type="STRING" id="44689.Q54FN2"/>
<dbReference type="PaxDb" id="44689-DDB0235303"/>
<dbReference type="EnsemblProtists" id="EAL62074">
    <property type="protein sequence ID" value="EAL62074"/>
    <property type="gene ID" value="DDB_G0290737"/>
</dbReference>
<dbReference type="GeneID" id="8627801"/>
<dbReference type="KEGG" id="ddi:DDB_G0290737"/>
<dbReference type="dictyBase" id="DDB_G0290737">
    <property type="gene designation" value="pks34"/>
</dbReference>
<dbReference type="VEuPathDB" id="AmoebaDB:DDB_G0290737"/>
<dbReference type="eggNOG" id="KOG1178">
    <property type="taxonomic scope" value="Eukaryota"/>
</dbReference>
<dbReference type="eggNOG" id="KOG1202">
    <property type="taxonomic scope" value="Eukaryota"/>
</dbReference>
<dbReference type="HOGENOM" id="CLU_000022_31_0_1"/>
<dbReference type="InParanoid" id="Q54FN2"/>
<dbReference type="OMA" id="FLGCECS"/>
<dbReference type="PhylomeDB" id="Q54FN2"/>
<dbReference type="PRO" id="PR:Q54FN2"/>
<dbReference type="Proteomes" id="UP000002195">
    <property type="component" value="Chromosome 5"/>
</dbReference>
<dbReference type="GO" id="GO:0004315">
    <property type="term" value="F:3-oxoacyl-[acyl-carrier-protein] synthase activity"/>
    <property type="evidence" value="ECO:0007669"/>
    <property type="project" value="InterPro"/>
</dbReference>
<dbReference type="GO" id="GO:0016491">
    <property type="term" value="F:oxidoreductase activity"/>
    <property type="evidence" value="ECO:0007669"/>
    <property type="project" value="InterPro"/>
</dbReference>
<dbReference type="GO" id="GO:0006633">
    <property type="term" value="P:fatty acid biosynthetic process"/>
    <property type="evidence" value="ECO:0000318"/>
    <property type="project" value="GO_Central"/>
</dbReference>
<dbReference type="CDD" id="cd02440">
    <property type="entry name" value="AdoMet_MTases"/>
    <property type="match status" value="1"/>
</dbReference>
<dbReference type="CDD" id="cd05195">
    <property type="entry name" value="enoyl_red"/>
    <property type="match status" value="1"/>
</dbReference>
<dbReference type="CDD" id="cd08954">
    <property type="entry name" value="KR_1_FAS_SDR_x"/>
    <property type="match status" value="1"/>
</dbReference>
<dbReference type="CDD" id="cd00833">
    <property type="entry name" value="PKS"/>
    <property type="match status" value="1"/>
</dbReference>
<dbReference type="CDD" id="cd05235">
    <property type="entry name" value="SDR_e1"/>
    <property type="match status" value="1"/>
</dbReference>
<dbReference type="FunFam" id="3.10.129.110:FF:000009">
    <property type="entry name" value="Probable polyketide synthase 2"/>
    <property type="match status" value="1"/>
</dbReference>
<dbReference type="FunFam" id="3.40.366.10:FF:000002">
    <property type="entry name" value="Probable polyketide synthase 2"/>
    <property type="match status" value="1"/>
</dbReference>
<dbReference type="FunFam" id="3.40.50.720:FF:000967">
    <property type="entry name" value="Probable polyketide synthase 30"/>
    <property type="match status" value="1"/>
</dbReference>
<dbReference type="FunFam" id="3.40.47.10:FF:000091">
    <property type="entry name" value="Probable polyketide synthase 32"/>
    <property type="match status" value="1"/>
</dbReference>
<dbReference type="FunFam" id="3.40.50.720:FF:000794">
    <property type="entry name" value="Probable polyketide synthase 33"/>
    <property type="match status" value="1"/>
</dbReference>
<dbReference type="Gene3D" id="3.40.47.10">
    <property type="match status" value="1"/>
</dbReference>
<dbReference type="Gene3D" id="1.10.1200.10">
    <property type="entry name" value="ACP-like"/>
    <property type="match status" value="1"/>
</dbReference>
<dbReference type="Gene3D" id="3.40.366.10">
    <property type="entry name" value="Malonyl-Coenzyme A Acyl Carrier Protein, domain 2"/>
    <property type="match status" value="1"/>
</dbReference>
<dbReference type="Gene3D" id="3.90.180.10">
    <property type="entry name" value="Medium-chain alcohol dehydrogenases, catalytic domain"/>
    <property type="match status" value="1"/>
</dbReference>
<dbReference type="Gene3D" id="3.40.50.720">
    <property type="entry name" value="NAD(P)-binding Rossmann-like Domain"/>
    <property type="match status" value="3"/>
</dbReference>
<dbReference type="Gene3D" id="3.10.129.110">
    <property type="entry name" value="Polyketide synthase dehydratase"/>
    <property type="match status" value="1"/>
</dbReference>
<dbReference type="Gene3D" id="3.40.50.150">
    <property type="entry name" value="Vaccinia Virus protein VP39"/>
    <property type="match status" value="1"/>
</dbReference>
<dbReference type="InterPro" id="IPR001227">
    <property type="entry name" value="Ac_transferase_dom_sf"/>
</dbReference>
<dbReference type="InterPro" id="IPR036736">
    <property type="entry name" value="ACP-like_sf"/>
</dbReference>
<dbReference type="InterPro" id="IPR014043">
    <property type="entry name" value="Acyl_transferase_dom"/>
</dbReference>
<dbReference type="InterPro" id="IPR016035">
    <property type="entry name" value="Acyl_Trfase/lysoPLipase"/>
</dbReference>
<dbReference type="InterPro" id="IPR013154">
    <property type="entry name" value="ADH-like_N"/>
</dbReference>
<dbReference type="InterPro" id="IPR013120">
    <property type="entry name" value="Far_NAD-bd"/>
</dbReference>
<dbReference type="InterPro" id="IPR011032">
    <property type="entry name" value="GroES-like_sf"/>
</dbReference>
<dbReference type="InterPro" id="IPR018201">
    <property type="entry name" value="Ketoacyl_synth_AS"/>
</dbReference>
<dbReference type="InterPro" id="IPR014031">
    <property type="entry name" value="Ketoacyl_synth_C"/>
</dbReference>
<dbReference type="InterPro" id="IPR014030">
    <property type="entry name" value="Ketoacyl_synth_N"/>
</dbReference>
<dbReference type="InterPro" id="IPR016036">
    <property type="entry name" value="Malonyl_transacylase_ACP-bd"/>
</dbReference>
<dbReference type="InterPro" id="IPR013217">
    <property type="entry name" value="Methyltransf_12"/>
</dbReference>
<dbReference type="InterPro" id="IPR036291">
    <property type="entry name" value="NAD(P)-bd_dom_sf"/>
</dbReference>
<dbReference type="InterPro" id="IPR032821">
    <property type="entry name" value="PKS_assoc"/>
</dbReference>
<dbReference type="InterPro" id="IPR020841">
    <property type="entry name" value="PKS_Beta-ketoAc_synthase_dom"/>
</dbReference>
<dbReference type="InterPro" id="IPR042104">
    <property type="entry name" value="PKS_dehydratase_sf"/>
</dbReference>
<dbReference type="InterPro" id="IPR020843">
    <property type="entry name" value="PKS_ER"/>
</dbReference>
<dbReference type="InterPro" id="IPR013968">
    <property type="entry name" value="PKS_KR"/>
</dbReference>
<dbReference type="InterPro" id="IPR049900">
    <property type="entry name" value="PKS_mFAS_DH"/>
</dbReference>
<dbReference type="InterPro" id="IPR050444">
    <property type="entry name" value="Polyketide_Synthase"/>
</dbReference>
<dbReference type="InterPro" id="IPR009081">
    <property type="entry name" value="PP-bd_ACP"/>
</dbReference>
<dbReference type="InterPro" id="IPR029063">
    <property type="entry name" value="SAM-dependent_MTases_sf"/>
</dbReference>
<dbReference type="InterPro" id="IPR010080">
    <property type="entry name" value="Thioester_reductase-like_dom"/>
</dbReference>
<dbReference type="InterPro" id="IPR016039">
    <property type="entry name" value="Thiolase-like"/>
</dbReference>
<dbReference type="PANTHER" id="PTHR45681:SF5">
    <property type="entry name" value="POLYKETIDE SYNTHASE 27-RELATED"/>
    <property type="match status" value="1"/>
</dbReference>
<dbReference type="PANTHER" id="PTHR45681">
    <property type="entry name" value="POLYKETIDE SYNTHASE 44-RELATED"/>
    <property type="match status" value="1"/>
</dbReference>
<dbReference type="Pfam" id="PF23297">
    <property type="entry name" value="ACP_SdgA_C"/>
    <property type="match status" value="1"/>
</dbReference>
<dbReference type="Pfam" id="PF00698">
    <property type="entry name" value="Acyl_transf_1"/>
    <property type="match status" value="1"/>
</dbReference>
<dbReference type="Pfam" id="PF08240">
    <property type="entry name" value="ADH_N"/>
    <property type="match status" value="1"/>
</dbReference>
<dbReference type="Pfam" id="PF13602">
    <property type="entry name" value="ADH_zinc_N_2"/>
    <property type="match status" value="1"/>
</dbReference>
<dbReference type="Pfam" id="PF16197">
    <property type="entry name" value="KAsynt_C_assoc"/>
    <property type="match status" value="1"/>
</dbReference>
<dbReference type="Pfam" id="PF00109">
    <property type="entry name" value="ketoacyl-synt"/>
    <property type="match status" value="1"/>
</dbReference>
<dbReference type="Pfam" id="PF02801">
    <property type="entry name" value="Ketoacyl-synt_C"/>
    <property type="match status" value="1"/>
</dbReference>
<dbReference type="Pfam" id="PF08659">
    <property type="entry name" value="KR"/>
    <property type="match status" value="1"/>
</dbReference>
<dbReference type="Pfam" id="PF08242">
    <property type="entry name" value="Methyltransf_12"/>
    <property type="match status" value="1"/>
</dbReference>
<dbReference type="Pfam" id="PF07993">
    <property type="entry name" value="NAD_binding_4"/>
    <property type="match status" value="1"/>
</dbReference>
<dbReference type="SMART" id="SM00827">
    <property type="entry name" value="PKS_AT"/>
    <property type="match status" value="1"/>
</dbReference>
<dbReference type="SMART" id="SM00829">
    <property type="entry name" value="PKS_ER"/>
    <property type="match status" value="1"/>
</dbReference>
<dbReference type="SMART" id="SM00822">
    <property type="entry name" value="PKS_KR"/>
    <property type="match status" value="1"/>
</dbReference>
<dbReference type="SMART" id="SM00825">
    <property type="entry name" value="PKS_KS"/>
    <property type="match status" value="1"/>
</dbReference>
<dbReference type="SUPFAM" id="SSF47336">
    <property type="entry name" value="ACP-like"/>
    <property type="match status" value="1"/>
</dbReference>
<dbReference type="SUPFAM" id="SSF52151">
    <property type="entry name" value="FabD/lysophospholipase-like"/>
    <property type="match status" value="1"/>
</dbReference>
<dbReference type="SUPFAM" id="SSF50129">
    <property type="entry name" value="GroES-like"/>
    <property type="match status" value="1"/>
</dbReference>
<dbReference type="SUPFAM" id="SSF51735">
    <property type="entry name" value="NAD(P)-binding Rossmann-fold domains"/>
    <property type="match status" value="3"/>
</dbReference>
<dbReference type="SUPFAM" id="SSF55048">
    <property type="entry name" value="Probable ACP-binding domain of malonyl-CoA ACP transacylase"/>
    <property type="match status" value="1"/>
</dbReference>
<dbReference type="SUPFAM" id="SSF53335">
    <property type="entry name" value="S-adenosyl-L-methionine-dependent methyltransferases"/>
    <property type="match status" value="1"/>
</dbReference>
<dbReference type="SUPFAM" id="SSF53901">
    <property type="entry name" value="Thiolase-like"/>
    <property type="match status" value="1"/>
</dbReference>
<dbReference type="PROSITE" id="PS50075">
    <property type="entry name" value="CARRIER"/>
    <property type="match status" value="1"/>
</dbReference>
<dbReference type="PROSITE" id="PS00606">
    <property type="entry name" value="KS3_1"/>
    <property type="match status" value="1"/>
</dbReference>
<dbReference type="PROSITE" id="PS52004">
    <property type="entry name" value="KS3_2"/>
    <property type="match status" value="1"/>
</dbReference>
<dbReference type="PROSITE" id="PS52019">
    <property type="entry name" value="PKS_MFAS_DH"/>
    <property type="match status" value="1"/>
</dbReference>
<proteinExistence type="inferred from homology"/>
<reference key="1">
    <citation type="journal article" date="2005" name="Nature">
        <title>The genome of the social amoeba Dictyostelium discoideum.</title>
        <authorList>
            <person name="Eichinger L."/>
            <person name="Pachebat J.A."/>
            <person name="Gloeckner G."/>
            <person name="Rajandream M.A."/>
            <person name="Sucgang R."/>
            <person name="Berriman M."/>
            <person name="Song J."/>
            <person name="Olsen R."/>
            <person name="Szafranski K."/>
            <person name="Xu Q."/>
            <person name="Tunggal B."/>
            <person name="Kummerfeld S."/>
            <person name="Madera M."/>
            <person name="Konfortov B.A."/>
            <person name="Rivero F."/>
            <person name="Bankier A.T."/>
            <person name="Lehmann R."/>
            <person name="Hamlin N."/>
            <person name="Davies R."/>
            <person name="Gaudet P."/>
            <person name="Fey P."/>
            <person name="Pilcher K."/>
            <person name="Chen G."/>
            <person name="Saunders D."/>
            <person name="Sodergren E.J."/>
            <person name="Davis P."/>
            <person name="Kerhornou A."/>
            <person name="Nie X."/>
            <person name="Hall N."/>
            <person name="Anjard C."/>
            <person name="Hemphill L."/>
            <person name="Bason N."/>
            <person name="Farbrother P."/>
            <person name="Desany B."/>
            <person name="Just E."/>
            <person name="Morio T."/>
            <person name="Rost R."/>
            <person name="Churcher C.M."/>
            <person name="Cooper J."/>
            <person name="Haydock S."/>
            <person name="van Driessche N."/>
            <person name="Cronin A."/>
            <person name="Goodhead I."/>
            <person name="Muzny D.M."/>
            <person name="Mourier T."/>
            <person name="Pain A."/>
            <person name="Lu M."/>
            <person name="Harper D."/>
            <person name="Lindsay R."/>
            <person name="Hauser H."/>
            <person name="James K.D."/>
            <person name="Quiles M."/>
            <person name="Madan Babu M."/>
            <person name="Saito T."/>
            <person name="Buchrieser C."/>
            <person name="Wardroper A."/>
            <person name="Felder M."/>
            <person name="Thangavelu M."/>
            <person name="Johnson D."/>
            <person name="Knights A."/>
            <person name="Loulseged H."/>
            <person name="Mungall K.L."/>
            <person name="Oliver K."/>
            <person name="Price C."/>
            <person name="Quail M.A."/>
            <person name="Urushihara H."/>
            <person name="Hernandez J."/>
            <person name="Rabbinowitsch E."/>
            <person name="Steffen D."/>
            <person name="Sanders M."/>
            <person name="Ma J."/>
            <person name="Kohara Y."/>
            <person name="Sharp S."/>
            <person name="Simmonds M.N."/>
            <person name="Spiegler S."/>
            <person name="Tivey A."/>
            <person name="Sugano S."/>
            <person name="White B."/>
            <person name="Walker D."/>
            <person name="Woodward J.R."/>
            <person name="Winckler T."/>
            <person name="Tanaka Y."/>
            <person name="Shaulsky G."/>
            <person name="Schleicher M."/>
            <person name="Weinstock G.M."/>
            <person name="Rosenthal A."/>
            <person name="Cox E.C."/>
            <person name="Chisholm R.L."/>
            <person name="Gibbs R.A."/>
            <person name="Loomis W.F."/>
            <person name="Platzer M."/>
            <person name="Kay R.R."/>
            <person name="Williams J.G."/>
            <person name="Dear P.H."/>
            <person name="Noegel A.A."/>
            <person name="Barrell B.G."/>
            <person name="Kuspa A."/>
        </authorList>
    </citation>
    <scope>NUCLEOTIDE SEQUENCE [LARGE SCALE GENOMIC DNA]</scope>
    <source>
        <strain>AX4</strain>
    </source>
</reference>
<reference key="2">
    <citation type="journal article" date="2007" name="Bioinformatics">
        <title>Polyketide synthase genes and the natural products potential of Dictyostelium discoideum.</title>
        <authorList>
            <person name="Zucko J."/>
            <person name="Skunca N."/>
            <person name="Curk T."/>
            <person name="Zupan B."/>
            <person name="Long P.F."/>
            <person name="Cullum J."/>
            <person name="Kessin R.H."/>
            <person name="Hranueli D."/>
        </authorList>
    </citation>
    <scope>IDENTIFICATION</scope>
</reference>
<accession>Q54FN2</accession>
<organism>
    <name type="scientific">Dictyostelium discoideum</name>
    <name type="common">Social amoeba</name>
    <dbReference type="NCBI Taxonomy" id="44689"/>
    <lineage>
        <taxon>Eukaryota</taxon>
        <taxon>Amoebozoa</taxon>
        <taxon>Evosea</taxon>
        <taxon>Eumycetozoa</taxon>
        <taxon>Dictyostelia</taxon>
        <taxon>Dictyosteliales</taxon>
        <taxon>Dictyosteliaceae</taxon>
        <taxon>Dictyostelium</taxon>
    </lineage>
</organism>
<gene>
    <name type="primary">pks34</name>
    <name type="ORF">DDB_G0290737</name>
</gene>
<keyword id="KW-0175">Coiled coil</keyword>
<keyword id="KW-0596">Phosphopantetheine</keyword>
<keyword id="KW-0597">Phosphoprotein</keyword>
<keyword id="KW-1185">Reference proteome</keyword>
<keyword id="KW-0808">Transferase</keyword>
<sequence length="3078" mass="350410">MTENIHNNSTYNNKLIRDRNDYDDVDGSGDVAVIGIGLRFPSGNLKESISKPNQLFNELLNGLDGIVTTSERWSDNYYLNGEIVSKFAGLLPLDEWKQFDPIFFAINPSNDNVSSIDPQQRLLLKCVWEALEDSGIDPISLRGTNTSTFIGSSTIDYNDLQRSPLETQNNIFGSTTHSIANRIGYCFDFRGENLTIDTACSSSSNAINCGYNSIKSNKSNVSIVGGVNFILDPHISKSFTKLDMLSPTGRCHTFSSDADGYVRSEGVGIVVLKKLKDAIKDSNNIYCVIKGSNSNIDGNFDKLNFYSPSKSSQYENIKLAIKSTNGQINESDIDYCETHGTGTPTGDPIELEGISRVFNNKASTTTLINNNKQVLVGSIKSNIGHTEACSGVASLIKCCLMFKNKLFLQNINFKEPNPLINFKEWGLKVVTEPIKFNENKSTVMLLNNFGVTGSNVCLILSEFYGNQFSYNKSNSYHKIKIDNKFNEKKKYLIPLSSNSSTSLNNYKSSIIKHSNSSSTTTSFKEFVHNQIKFKSTSLIQKSVIIASDWNEFQDENNQIKLENSDNLISNITVEKKKSPITVMVLCGQGSQYNKMASSLYDNEPIFRESVNRFDKELFKYYGYSVLDKLRSIDDKDLISIHQPILAQPANVIIQVSLYELYKHWGVSADIIIGHSLGEISSSYCSGIIDFQTLCYLTYHRSVAQNRTIGTGRMLSVNISSDEFINKYQSTTKYESLEIACYNSPTSIVISGNEDLLNEITNEFKSNDIFCTMLGLLSSFHTSSQQMIKDEVCSLNISSKQPSIAVFSTVTTNLFNHQSSPFNADYVFNNIRQPVRFTQTITNLYKHIESNDMGNEITFIEVSPHPTLQYYLNQMKSTQSSYFNNGKNITIYSPLNKKKNDYNEFLKTISLLYVNNNFDINFKSQLINNNNTNQLNNLPLYQWDDKEYFKINSFHEKIKNEGPSIHSLGNNTDSPYPSYQTFIDIKKLPFQWLKGHQVSDKFYYPGMGYVLNLLSIYPNQDITIGSLEFKSPLVLTEGNNQCLQTTIAPLSKNEFNIKSHYKDQKTNQWILSSLGNFSLTKHNIENNEPINIQSLKDKCNFTSISKQDLYETIRIKTNLTYKGLFQGVKQCHIGSNCSLTIVSLNEIYNQKEYNHLLNNSIMDTFFNTAILDTCLHGVLVAVTQPIVLDRIEAFKFYSSNYPSFNNNNNSNNNDTIKELYVYSEIRARTNSQTYSGSIKIILPNGTLLVDIGNVVCTIVGSNPDSTIICKPPSNEIYTPYLQSKDSMINKPEQFKHLYRVDEFSVKEEGNRFISKGLLPSLFYKHINKRCPSINLESLTTLEYDQFKQLYYDNSLANENLFKFIFEVLKKFQNNPNINNNNNNNNNNNNNNNNNSNGYNNYENLYIRATKVMAKQLFPLKDDDSITDTPQSLFESGYLDEFYKNSNVIKPSNNLLSEIIVETLKPILNEPIVFRILEAGGGTGSLSLLILEKICKLLNDNSTTSIINIEFTWSDVSASFFAEIKENFSSFTNHNNLNIIYRVLDLEKPLLDQDLKASYYDFVVMSNVMHVVKKLKPTLNEIHNILTPNGQLLFIEPPYKSFYFDSIFGCFSQWWPSSDSDIELRPDRCCMKQEKWINLLNQCNYRDTIMSGNDNLVFLIQTRKPTINEIISEQSISLDQLNSFNNIILFSSNSNNIRNINSYKNDICSSSIQNLIRLNQELKHKIVNISNYNEFQSWITNYQNKDDCNKTLIIFLKSIESTMNTFNFKEITFEYIQINQLILKLELSNNFKHLLLSLNSTTDNYLSSSIIGAARYFVEFPQLDLLTLNYDNISIENNQQLSLINYLINPNNNIQKEFTINNNKVYYERYCRRSNNIKSIFQSKSFETNKDNLYIQLNSNLEYQLYSKKAKLNSNEVEIEVKATGINYKDYLMYIGMIGSDLDIKYGKEYEIENGIGIDNPNIGNDFSGIITRLGNNVKKFKVGDQVCGIGSKASSSHVIVDFTSIYYKPLNYSHSVSASIPSIYITSLHSIYSIGNLKSNESILIHSAAGGIGISSLDLLKSKQHQGYIFLTVSSKDKEEYLIKKYGSLITAIYSSRNKNYVKDIKNKLMELGEVEQQGVDLILNTLSSEYMDSNFQCLNLSGRIVDLSITHLTPNDYMTNNHFKFNMTYSNVEVVDFTSKLIKSYLKKIIKMINSNKLELSVPIIEYSNNQFKDAIEYINQRKHIGKIIVNHNQDEFNRVYNNYQSNNNHIIMKHLYDISKLNIGKNILLTGQTGIVLEILKYLVKYSNHSIENIIILSKSKLKWELELLINQSKFKKDNNIKFHFNQIDIEDSNKVNQVLNQLELNENITNIDSIIHFAFMNDIGDVQQVDMNRLNNTHGAKTIGAINLHNQSINRSWNIKQFIMASSVVSIFGSDQQCCYVSACSVIDSLSKYRHSIGLPSLAINLGAISSTGFVSRNNAIETMFKSSIFNLFSPQLVISSLDLFIQNQHQYPNYCLSDFNFEVLPSTLTNQYHSKFDFEINIVKKSNQMKSFTGGNGDNNEIIRSTILNKISELLSIDESKINEDLQLTQYGMDSLVIVQLKNFIDNQLGHNIITIQQLQNNKINQSIEIIKSAHNNNNNNNNNNNNNNNNNNNNNNLVKKEQQSLDEFIKNETKLNESIISRPYSIKNILNNNNNSKSIFLTGSTGFLGAYLLTELIKMNNISKIYCLIRNNSKLTNPIDVIINNLKKHQLINMNKGSPNQRLNSNIESGDNSDNNSQISEDQLIKIIPTIGDISKDNFGLTEQDYLKLSNECDIIINSAADLDLKSNYEESKTVNVNNVNQVIKLSVSNNSSQKLIVHFSSLAVFINHPFKDEEDFEETNLVPSYNSTPIGYVQSKVISEKLLTNAAESRGIPSIIIRPPDIFSNPITGIGHSNDFISLLIKSSKEIGYYPNIHKSVFTTPVTTIAKTTIDLIFNENSWNQNKSKPISIYNFNGDSIEMKSFYRVLENSFKCKEIDFYEWIELVSKSNGKSSKRYSTFHIHKNQNLLLTSFKINSLFKMSNSTKELLISIGSYNHQDWEINESMIFNDIINNH</sequence>
<comment type="function">
    <text evidence="1">Probable polyketide synthase.</text>
</comment>
<comment type="cofactor">
    <cofactor evidence="1">
        <name>pantetheine 4'-phosphate</name>
        <dbReference type="ChEBI" id="CHEBI:47942"/>
    </cofactor>
    <text evidence="1">Binds 1 phosphopantetheine covalently.</text>
</comment>
<comment type="domain">
    <text evidence="1">Modular protein that is responsible for the completion of one condensation-processing cycle. The beta-ketoacyl synthase region is responsible for the actual condensation reaction while the acyl/malonyl transferase region is responsible for incorporating carboxylic acids units onto an acyl carrier protein (ACP) domain (By similarity).</text>
</comment>
<comment type="miscellaneous">
    <text>Encoded by one of the numerous copies of polyketide synthase genes and clustered as a pair pks33/pks34 in chromosome 5.</text>
</comment>
<feature type="chain" id="PRO_0000371394" description="Probable polyketide synthase 34">
    <location>
        <begin position="1"/>
        <end position="3078"/>
    </location>
</feature>
<feature type="domain" description="Ketosynthase family 3 (KS3)" evidence="4">
    <location>
        <begin position="28"/>
        <end position="462"/>
    </location>
</feature>
<feature type="domain" description="PKS/mFAS DH" evidence="5">
    <location>
        <begin position="954"/>
        <end position="1264"/>
    </location>
</feature>
<feature type="domain" description="Carrier" evidence="3">
    <location>
        <begin position="2541"/>
        <end position="2618"/>
    </location>
</feature>
<feature type="region of interest" description="Acyl/malonyl transferase">
    <location>
        <begin position="665"/>
        <end position="698"/>
    </location>
</feature>
<feature type="region of interest" description="N-terminal hotdog fold" evidence="5">
    <location>
        <begin position="954"/>
        <end position="1083"/>
    </location>
</feature>
<feature type="region of interest" description="C-terminal hotdog fold" evidence="5">
    <location>
        <begin position="1099"/>
        <end position="1264"/>
    </location>
</feature>
<feature type="region of interest" description="Disordered" evidence="7">
    <location>
        <begin position="1375"/>
        <end position="1396"/>
    </location>
</feature>
<feature type="region of interest" description="Disordered" evidence="7">
    <location>
        <begin position="2617"/>
        <end position="2640"/>
    </location>
</feature>
<feature type="region of interest" description="Disordered" evidence="7">
    <location>
        <begin position="2739"/>
        <end position="2761"/>
    </location>
</feature>
<feature type="coiled-coil region" evidence="2">
    <location>
        <begin position="2621"/>
        <end position="2652"/>
    </location>
</feature>
<feature type="compositionally biased region" description="Low complexity" evidence="7">
    <location>
        <begin position="2619"/>
        <end position="2640"/>
    </location>
</feature>
<feature type="active site" description="For beta-ketoacyl synthase activity" evidence="4">
    <location>
        <position position="200"/>
    </location>
</feature>
<feature type="active site" description="For beta-ketoacyl synthase activity" evidence="4">
    <location>
        <position position="339"/>
    </location>
</feature>
<feature type="active site" description="For beta-ketoacyl synthase activity" evidence="4">
    <location>
        <position position="385"/>
    </location>
</feature>
<feature type="active site" description="For acyl/malonyl transferase activity" evidence="6">
    <location>
        <position position="675"/>
    </location>
</feature>
<feature type="active site" description="Proton acceptor; for dehydratase activity" evidence="5">
    <location>
        <position position="995"/>
    </location>
</feature>
<feature type="active site" description="Proton donor; for dehydratase activity" evidence="5">
    <location>
        <position position="1171"/>
    </location>
</feature>
<feature type="modified residue" description="O-(pantetheine 4'-phosphoryl)serine" evidence="3">
    <location>
        <position position="2578"/>
    </location>
</feature>
<name>PKS34_DICDI</name>